<organism>
    <name type="scientific">Saccharomyces cerevisiae (strain ATCC 204508 / S288c)</name>
    <name type="common">Baker's yeast</name>
    <dbReference type="NCBI Taxonomy" id="559292"/>
    <lineage>
        <taxon>Eukaryota</taxon>
        <taxon>Fungi</taxon>
        <taxon>Dikarya</taxon>
        <taxon>Ascomycota</taxon>
        <taxon>Saccharomycotina</taxon>
        <taxon>Saccharomycetes</taxon>
        <taxon>Saccharomycetales</taxon>
        <taxon>Saccharomycetaceae</taxon>
        <taxon>Saccharomyces</taxon>
    </lineage>
</organism>
<keyword id="KW-0002">3D-structure</keyword>
<keyword id="KW-0963">Cytoplasm</keyword>
<keyword id="KW-0489">Methyltransferase</keyword>
<keyword id="KW-0496">Mitochondrion</keyword>
<keyword id="KW-1185">Reference proteome</keyword>
<keyword id="KW-0949">S-adenosyl-L-methionine</keyword>
<keyword id="KW-0808">Transferase</keyword>
<keyword id="KW-0819">tRNA processing</keyword>
<accession>Q08282</accession>
<accession>D6W1S8</accession>
<feature type="chain" id="PRO_0000226146" description="tRNA wybutosine-synthesizing protein 4">
    <location>
        <begin position="1"/>
        <end position="695"/>
    </location>
</feature>
<feature type="active site" description="Proton donor; for both methylation and methoxycarbonylation activities" evidence="3">
    <location>
        <position position="88"/>
    </location>
</feature>
<feature type="active site" description="Proton acceptor; for methoxycarbonylation activity" evidence="5">
    <location>
        <position position="229"/>
    </location>
</feature>
<feature type="binding site">
    <location>
        <position position="38"/>
    </location>
    <ligand>
        <name>S-adenosyl-L-methionine</name>
        <dbReference type="ChEBI" id="CHEBI:59789"/>
    </ligand>
</feature>
<feature type="binding site">
    <location>
        <position position="88"/>
    </location>
    <ligand>
        <name>S-adenosyl-L-methionine</name>
        <dbReference type="ChEBI" id="CHEBI:59789"/>
    </ligand>
</feature>
<feature type="binding site">
    <location>
        <position position="115"/>
    </location>
    <ligand>
        <name>S-adenosyl-L-methionine</name>
        <dbReference type="ChEBI" id="CHEBI:59789"/>
    </ligand>
</feature>
<feature type="binding site">
    <location>
        <begin position="146"/>
        <end position="147"/>
    </location>
    <ligand>
        <name>S-adenosyl-L-methionine</name>
        <dbReference type="ChEBI" id="CHEBI:59789"/>
    </ligand>
</feature>
<feature type="binding site">
    <location>
        <begin position="196"/>
        <end position="197"/>
    </location>
    <ligand>
        <name>S-adenosyl-L-methionine</name>
        <dbReference type="ChEBI" id="CHEBI:59789"/>
    </ligand>
</feature>
<feature type="binding site">
    <location>
        <position position="224"/>
    </location>
    <ligand>
        <name>S-adenosyl-L-methionine</name>
        <dbReference type="ChEBI" id="CHEBI:59789"/>
    </ligand>
</feature>
<feature type="mutagenesis site" description="Loss of function." evidence="3">
    <original>R</original>
    <variation>A</variation>
    <location>
        <position position="88"/>
    </location>
</feature>
<feature type="sequence conflict" description="In Ref. 1; CAA99162." evidence="4" ref="1">
    <original>L</original>
    <variation>M</variation>
    <location>
        <position position="417"/>
    </location>
</feature>
<feature type="helix" evidence="7">
    <location>
        <begin position="7"/>
        <end position="10"/>
    </location>
</feature>
<feature type="helix" evidence="7">
    <location>
        <begin position="17"/>
        <end position="28"/>
    </location>
</feature>
<feature type="helix" evidence="7">
    <location>
        <begin position="30"/>
        <end position="44"/>
    </location>
</feature>
<feature type="helix" evidence="7">
    <location>
        <begin position="46"/>
        <end position="48"/>
    </location>
</feature>
<feature type="helix" evidence="7">
    <location>
        <begin position="51"/>
        <end position="53"/>
    </location>
</feature>
<feature type="helix" evidence="7">
    <location>
        <begin position="67"/>
        <end position="70"/>
    </location>
</feature>
<feature type="helix" evidence="7">
    <location>
        <begin position="79"/>
        <end position="102"/>
    </location>
</feature>
<feature type="strand" evidence="7">
    <location>
        <begin position="107"/>
        <end position="115"/>
    </location>
</feature>
<feature type="helix" evidence="7">
    <location>
        <begin position="121"/>
        <end position="126"/>
    </location>
</feature>
<feature type="helix" evidence="7">
    <location>
        <begin position="131"/>
        <end position="136"/>
    </location>
</feature>
<feature type="strand" evidence="7">
    <location>
        <begin position="137"/>
        <end position="146"/>
    </location>
</feature>
<feature type="helix" evidence="7">
    <location>
        <begin position="148"/>
        <end position="160"/>
    </location>
</feature>
<feature type="helix" evidence="7">
    <location>
        <begin position="162"/>
        <end position="167"/>
    </location>
</feature>
<feature type="strand" evidence="7">
    <location>
        <begin position="188"/>
        <end position="194"/>
    </location>
</feature>
<feature type="helix" evidence="7">
    <location>
        <begin position="200"/>
        <end position="209"/>
    </location>
</feature>
<feature type="turn" evidence="7">
    <location>
        <begin position="210"/>
        <end position="213"/>
    </location>
</feature>
<feature type="strand" evidence="7">
    <location>
        <begin position="217"/>
        <end position="226"/>
    </location>
</feature>
<feature type="helix" evidence="7">
    <location>
        <begin position="227"/>
        <end position="229"/>
    </location>
</feature>
<feature type="helix" evidence="7">
    <location>
        <begin position="232"/>
        <end position="243"/>
    </location>
</feature>
<feature type="strand" evidence="7">
    <location>
        <begin position="245"/>
        <end position="255"/>
    </location>
</feature>
<feature type="helix" evidence="7">
    <location>
        <begin position="264"/>
        <end position="275"/>
    </location>
</feature>
<feature type="helix" evidence="7">
    <location>
        <begin position="282"/>
        <end position="284"/>
    </location>
</feature>
<feature type="helix" evidence="7">
    <location>
        <begin position="289"/>
        <end position="298"/>
    </location>
</feature>
<feature type="strand" evidence="7">
    <location>
        <begin position="303"/>
        <end position="308"/>
    </location>
</feature>
<feature type="helix" evidence="7">
    <location>
        <begin position="309"/>
        <end position="315"/>
    </location>
</feature>
<feature type="helix" evidence="7">
    <location>
        <begin position="318"/>
        <end position="326"/>
    </location>
</feature>
<feature type="helix" evidence="7">
    <location>
        <begin position="333"/>
        <end position="341"/>
    </location>
</feature>
<feature type="strand" evidence="7">
    <location>
        <begin position="343"/>
        <end position="350"/>
    </location>
</feature>
<feature type="strand" evidence="6">
    <location>
        <begin position="352"/>
        <end position="354"/>
    </location>
</feature>
<feature type="turn" evidence="7">
    <location>
        <begin position="358"/>
        <end position="360"/>
    </location>
</feature>
<feature type="strand" evidence="7">
    <location>
        <begin position="375"/>
        <end position="381"/>
    </location>
</feature>
<feature type="strand" evidence="7">
    <location>
        <begin position="392"/>
        <end position="395"/>
    </location>
</feature>
<feature type="strand" evidence="7">
    <location>
        <begin position="400"/>
        <end position="403"/>
    </location>
</feature>
<feature type="strand" evidence="7">
    <location>
        <begin position="406"/>
        <end position="410"/>
    </location>
</feature>
<feature type="strand" evidence="7">
    <location>
        <begin position="414"/>
        <end position="419"/>
    </location>
</feature>
<feature type="strand" evidence="7">
    <location>
        <begin position="424"/>
        <end position="428"/>
    </location>
</feature>
<feature type="strand" evidence="7">
    <location>
        <begin position="444"/>
        <end position="448"/>
    </location>
</feature>
<feature type="turn" evidence="7">
    <location>
        <begin position="449"/>
        <end position="452"/>
    </location>
</feature>
<feature type="strand" evidence="7">
    <location>
        <begin position="453"/>
        <end position="457"/>
    </location>
</feature>
<feature type="strand" evidence="7">
    <location>
        <begin position="460"/>
        <end position="462"/>
    </location>
</feature>
<feature type="strand" evidence="7">
    <location>
        <begin position="471"/>
        <end position="474"/>
    </location>
</feature>
<feature type="turn" evidence="7">
    <location>
        <begin position="475"/>
        <end position="478"/>
    </location>
</feature>
<feature type="strand" evidence="7">
    <location>
        <begin position="479"/>
        <end position="482"/>
    </location>
</feature>
<feature type="strand" evidence="6">
    <location>
        <begin position="490"/>
        <end position="492"/>
    </location>
</feature>
<feature type="strand" evidence="7">
    <location>
        <begin position="494"/>
        <end position="497"/>
    </location>
</feature>
<feature type="strand" evidence="7">
    <location>
        <begin position="503"/>
        <end position="506"/>
    </location>
</feature>
<feature type="strand" evidence="6">
    <location>
        <begin position="509"/>
        <end position="512"/>
    </location>
</feature>
<feature type="strand" evidence="7">
    <location>
        <begin position="514"/>
        <end position="519"/>
    </location>
</feature>
<feature type="turn" evidence="7">
    <location>
        <begin position="520"/>
        <end position="523"/>
    </location>
</feature>
<feature type="strand" evidence="7">
    <location>
        <begin position="524"/>
        <end position="527"/>
    </location>
</feature>
<feature type="helix" evidence="7">
    <location>
        <begin position="533"/>
        <end position="536"/>
    </location>
</feature>
<feature type="strand" evidence="6">
    <location>
        <begin position="539"/>
        <end position="541"/>
    </location>
</feature>
<feature type="strand" evidence="7">
    <location>
        <begin position="543"/>
        <end position="547"/>
    </location>
</feature>
<feature type="turn" evidence="7">
    <location>
        <begin position="548"/>
        <end position="551"/>
    </location>
</feature>
<feature type="strand" evidence="7">
    <location>
        <begin position="552"/>
        <end position="556"/>
    </location>
</feature>
<feature type="strand" evidence="7">
    <location>
        <begin position="569"/>
        <end position="575"/>
    </location>
</feature>
<feature type="strand" evidence="7">
    <location>
        <begin position="584"/>
        <end position="591"/>
    </location>
</feature>
<feature type="helix" evidence="7">
    <location>
        <begin position="593"/>
        <end position="595"/>
    </location>
</feature>
<feature type="strand" evidence="7">
    <location>
        <begin position="601"/>
        <end position="606"/>
    </location>
</feature>
<feature type="strand" evidence="7">
    <location>
        <begin position="609"/>
        <end position="613"/>
    </location>
</feature>
<feature type="turn" evidence="7">
    <location>
        <begin position="624"/>
        <end position="626"/>
    </location>
</feature>
<feature type="strand" evidence="7">
    <location>
        <begin position="627"/>
        <end position="632"/>
    </location>
</feature>
<feature type="turn" evidence="7">
    <location>
        <begin position="633"/>
        <end position="636"/>
    </location>
</feature>
<feature type="strand" evidence="7">
    <location>
        <begin position="637"/>
        <end position="640"/>
    </location>
</feature>
<feature type="helix" evidence="7">
    <location>
        <begin position="645"/>
        <end position="650"/>
    </location>
</feature>
<feature type="strand" evidence="7">
    <location>
        <begin position="659"/>
        <end position="661"/>
    </location>
</feature>
<feature type="strand" evidence="7">
    <location>
        <begin position="668"/>
        <end position="671"/>
    </location>
</feature>
<feature type="strand" evidence="7">
    <location>
        <begin position="674"/>
        <end position="676"/>
    </location>
</feature>
<feature type="helix" evidence="8">
    <location>
        <begin position="677"/>
        <end position="679"/>
    </location>
</feature>
<feature type="strand" evidence="7">
    <location>
        <begin position="682"/>
        <end position="684"/>
    </location>
</feature>
<feature type="strand" evidence="7">
    <location>
        <begin position="688"/>
        <end position="692"/>
    </location>
</feature>
<proteinExistence type="evidence at protein level"/>
<comment type="function">
    <text evidence="1 2 3">S-adenosyl-L-methionine-dependent methyltransferase that acts as a component of the wybutosine biosynthesis pathway. Wybutosine is a hyper modified guanosine with a tricyclic base found at the 3'-position adjacent to the anticodon of eukaryotic phenylalanine tRNA. Catalyzes the final 2 independent reactions, methylation of the alpha-carboxy group of wybutosine-72 to form wybutosine-58, and methoxycarbonylation of alpha-amino group of wybutosine-58 through the fixation of CO(2) to complete wybutosine.</text>
</comment>
<comment type="catalytic activity">
    <reaction evidence="3">
        <text>7-[(3S)-3-amino-3-carboxypropyl]wyosine(37) in tRNA(Phe) + S-adenosyl-L-methionine = 7-[(3S)-(3-amino-3-methoxycarbonyl)propyl]wyosine(37) in tRNA(Phe) + S-adenosyl-L-homocysteine</text>
        <dbReference type="Rhea" id="RHEA:36903"/>
        <dbReference type="Rhea" id="RHEA-COMP:10379"/>
        <dbReference type="Rhea" id="RHEA-COMP:11844"/>
        <dbReference type="ChEBI" id="CHEBI:57856"/>
        <dbReference type="ChEBI" id="CHEBI:59789"/>
        <dbReference type="ChEBI" id="CHEBI:73543"/>
        <dbReference type="ChEBI" id="CHEBI:74275"/>
        <dbReference type="EC" id="2.1.1.290"/>
    </reaction>
</comment>
<comment type="catalytic activity">
    <reaction evidence="3">
        <text>7-[(3S)-(3-amino-3-methoxycarbonyl)propyl]wyosine(37) in tRNA(Phe) + S-adenosyl-L-methionine + CO2 = wybutosine(37) in tRNA(Phe) + S-adenosyl-L-homocysteine + 2 H(+)</text>
        <dbReference type="Rhea" id="RHEA:37119"/>
        <dbReference type="Rhea" id="RHEA-COMP:11844"/>
        <dbReference type="Rhea" id="RHEA-COMP:11847"/>
        <dbReference type="ChEBI" id="CHEBI:15378"/>
        <dbReference type="ChEBI" id="CHEBI:16526"/>
        <dbReference type="ChEBI" id="CHEBI:57856"/>
        <dbReference type="ChEBI" id="CHEBI:59789"/>
        <dbReference type="ChEBI" id="CHEBI:73544"/>
        <dbReference type="ChEBI" id="CHEBI:74275"/>
        <dbReference type="EC" id="2.3.1.231"/>
    </reaction>
</comment>
<comment type="pathway">
    <text>tRNA modification; wybutosine-tRNA(Phe) biosynthesis.</text>
</comment>
<comment type="subcellular location">
    <subcellularLocation>
        <location>Cytoplasm</location>
    </subcellularLocation>
    <subcellularLocation>
        <location>Mitochondrion</location>
    </subcellularLocation>
</comment>
<comment type="similarity">
    <text evidence="4">Belongs to the methyltransferase superfamily. LCMT family.</text>
</comment>
<sequence>MKNLTTIKQTNKNVKQERRKKYADLAIQGTNNSSIASKRSVELLYLPKLSSANNFQMDKNNKLLEYFKFFVPKKIKRSPCINRGYWLRLFAIRSRLNSIIEQTPQDKKIVVVNLGCGYDPLPFQLLDTNNIQSQQYHDRVSFIDIDYSDLLKIKIELIKTIPELSKIIGLSEDKDYVDDSNVDFLTTPKYLARPCDLNDSKMFSTLLNECQLYDPNVVKVFVAEVSLAYMKPERSDSIIEATSKMENSHFIILEQLIPKGPFEPFSKQMLAHFKRNDSPLQSVLKYNTIESQVQRFNKLGFAYVNVGDMFQLWESADEATKKELLKVEPFDELEEFHLFCHHYVLCHATNYKEFAFTQGFLFDRSISEINLTVDEDYQLLECECPINRKFGDVDVAGNDVFYMGGSNPYRVNEILQLSIHYDKIDMKNIEVSSSEVPVARMCHTFTTISRNNQLLLIGGRKAPHQGLSDNWIFDMKTREWSMIKSLSHTRFRHSACSLPDGNVLILGGVTEGPAMLLYNVTEEIFKDVTPKDEFFQNSLVSAGLEFDPVSKQGIILGGGFMDQTTVSDKAIIFKYDAENATEPITVIKKLQHPLFQRYGSQIKYITPRKLLIVGGTSPSGLFDRTNSIISLDPLSETLTSIPISRRIWEDHSLMLAGFSLVSTSMGTIHIIGGGATCYGFGSVTNVGLKLIAIAK</sequence>
<reference key="1">
    <citation type="journal article" date="1997" name="Nature">
        <title>The nucleotide sequence of Saccharomyces cerevisiae chromosome XV.</title>
        <authorList>
            <person name="Dujon B."/>
            <person name="Albermann K."/>
            <person name="Aldea M."/>
            <person name="Alexandraki D."/>
            <person name="Ansorge W."/>
            <person name="Arino J."/>
            <person name="Benes V."/>
            <person name="Bohn C."/>
            <person name="Bolotin-Fukuhara M."/>
            <person name="Bordonne R."/>
            <person name="Boyer J."/>
            <person name="Camasses A."/>
            <person name="Casamayor A."/>
            <person name="Casas C."/>
            <person name="Cheret G."/>
            <person name="Cziepluch C."/>
            <person name="Daignan-Fornier B."/>
            <person name="Dang V.-D."/>
            <person name="de Haan M."/>
            <person name="Delius H."/>
            <person name="Durand P."/>
            <person name="Fairhead C."/>
            <person name="Feldmann H."/>
            <person name="Gaillon L."/>
            <person name="Galisson F."/>
            <person name="Gamo F.-J."/>
            <person name="Gancedo C."/>
            <person name="Goffeau A."/>
            <person name="Goulding S.E."/>
            <person name="Grivell L.A."/>
            <person name="Habbig B."/>
            <person name="Hand N.J."/>
            <person name="Hani J."/>
            <person name="Hattenhorst U."/>
            <person name="Hebling U."/>
            <person name="Hernando Y."/>
            <person name="Herrero E."/>
            <person name="Heumann K."/>
            <person name="Hiesel R."/>
            <person name="Hilger F."/>
            <person name="Hofmann B."/>
            <person name="Hollenberg C.P."/>
            <person name="Hughes B."/>
            <person name="Jauniaux J.-C."/>
            <person name="Kalogeropoulos A."/>
            <person name="Katsoulou C."/>
            <person name="Kordes E."/>
            <person name="Lafuente M.J."/>
            <person name="Landt O."/>
            <person name="Louis E.J."/>
            <person name="Maarse A.C."/>
            <person name="Madania A."/>
            <person name="Mannhaupt G."/>
            <person name="Marck C."/>
            <person name="Martin R.P."/>
            <person name="Mewes H.-W."/>
            <person name="Michaux G."/>
            <person name="Paces V."/>
            <person name="Parle-McDermott A.G."/>
            <person name="Pearson B.M."/>
            <person name="Perrin A."/>
            <person name="Pettersson B."/>
            <person name="Poch O."/>
            <person name="Pohl T.M."/>
            <person name="Poirey R."/>
            <person name="Portetelle D."/>
            <person name="Pujol A."/>
            <person name="Purnelle B."/>
            <person name="Ramezani Rad M."/>
            <person name="Rechmann S."/>
            <person name="Schwager C."/>
            <person name="Schweizer M."/>
            <person name="Sor F."/>
            <person name="Sterky F."/>
            <person name="Tarassov I.A."/>
            <person name="Teodoru C."/>
            <person name="Tettelin H."/>
            <person name="Thierry A."/>
            <person name="Tobiasch E."/>
            <person name="Tzermia M."/>
            <person name="Uhlen M."/>
            <person name="Unseld M."/>
            <person name="Valens M."/>
            <person name="Vandenbol M."/>
            <person name="Vetter I."/>
            <person name="Vlcek C."/>
            <person name="Voet M."/>
            <person name="Volckaert G."/>
            <person name="Voss H."/>
            <person name="Wambutt R."/>
            <person name="Wedler H."/>
            <person name="Wiemann S."/>
            <person name="Winsor B."/>
            <person name="Wolfe K.H."/>
            <person name="Zollner A."/>
            <person name="Zumstein E."/>
            <person name="Kleine K."/>
        </authorList>
    </citation>
    <scope>NUCLEOTIDE SEQUENCE [LARGE SCALE GENOMIC DNA]</scope>
    <source>
        <strain>ATCC 204508 / S288c</strain>
    </source>
</reference>
<reference key="2">
    <citation type="journal article" date="2014" name="G3 (Bethesda)">
        <title>The reference genome sequence of Saccharomyces cerevisiae: Then and now.</title>
        <authorList>
            <person name="Engel S.R."/>
            <person name="Dietrich F.S."/>
            <person name="Fisk D.G."/>
            <person name="Binkley G."/>
            <person name="Balakrishnan R."/>
            <person name="Costanzo M.C."/>
            <person name="Dwight S.S."/>
            <person name="Hitz B.C."/>
            <person name="Karra K."/>
            <person name="Nash R.S."/>
            <person name="Weng S."/>
            <person name="Wong E.D."/>
            <person name="Lloyd P."/>
            <person name="Skrzypek M.S."/>
            <person name="Miyasato S.R."/>
            <person name="Simison M."/>
            <person name="Cherry J.M."/>
        </authorList>
    </citation>
    <scope>GENOME REANNOTATION</scope>
    <scope>SEQUENCE REVISION TO 417</scope>
    <source>
        <strain>ATCC 204508 / S288c</strain>
    </source>
</reference>
<reference key="3">
    <citation type="journal article" date="2003" name="Nature">
        <title>Global analysis of protein localization in budding yeast.</title>
        <authorList>
            <person name="Huh W.-K."/>
            <person name="Falvo J.V."/>
            <person name="Gerke L.C."/>
            <person name="Carroll A.S."/>
            <person name="Howson R.W."/>
            <person name="Weissman J.S."/>
            <person name="O'Shea E.K."/>
        </authorList>
    </citation>
    <scope>SUBCELLULAR LOCATION [LARGE SCALE ANALYSIS]</scope>
</reference>
<reference key="4">
    <citation type="journal article" date="2003" name="Proc. Natl. Acad. Sci. U.S.A.">
        <title>The proteome of Saccharomyces cerevisiae mitochondria.</title>
        <authorList>
            <person name="Sickmann A."/>
            <person name="Reinders J."/>
            <person name="Wagner Y."/>
            <person name="Joppich C."/>
            <person name="Zahedi R.P."/>
            <person name="Meyer H.E."/>
            <person name="Schoenfisch B."/>
            <person name="Perschil I."/>
            <person name="Chacinska A."/>
            <person name="Guiard B."/>
            <person name="Rehling P."/>
            <person name="Pfanner N."/>
            <person name="Meisinger C."/>
        </authorList>
    </citation>
    <scope>SUBCELLULAR LOCATION [LARGE SCALE ANALYSIS]</scope>
</reference>
<reference key="5">
    <citation type="journal article" date="2006" name="EMBO J.">
        <title>Biosynthesis of wybutosine, a hyper-modified nucleoside in eukaryotic phenylalanine tRNA.</title>
        <authorList>
            <person name="Noma A."/>
            <person name="Kirino Y."/>
            <person name="Ikeuchi Y."/>
            <person name="Suzuki T."/>
        </authorList>
    </citation>
    <scope>FUNCTION</scope>
</reference>
<reference key="6">
    <citation type="journal article" date="2006" name="Nucleic Acids Symp. Ser.">
        <title>Ribonucleome analysis identified enzyme genes responsible for wybutosine synthesis.</title>
        <authorList>
            <person name="Noma A."/>
            <person name="Suzuki T."/>
        </authorList>
    </citation>
    <scope>FUNCTION</scope>
</reference>
<reference key="7">
    <citation type="journal article" date="2009" name="Nucleic Acids Res.">
        <title>Structural basis of tRNA modification with CO2 fixation and methylation by wybutosine synthesizing enzyme TYW4.</title>
        <authorList>
            <person name="Suzuki Y."/>
            <person name="Noma A."/>
            <person name="Suzuki T."/>
            <person name="Ishitani R."/>
            <person name="Nureki O."/>
        </authorList>
    </citation>
    <scope>X-RAY CRYSTALLOGRAPHY (1.7 ANGSTROMS) IN COMPLEXES WITH S-ADENOSYL-L-METHIONINE AND S-ADENOSYL-L-HOMOCYSTEINE</scope>
    <scope>FUNCTION</scope>
    <scope>CATALYTIC ACTIVITY</scope>
    <scope>ACTIVE SITES</scope>
    <scope>MUTAGENESIS OF ARG-88</scope>
</reference>
<name>TYW4_YEAST</name>
<protein>
    <recommendedName>
        <fullName>tRNA wybutosine-synthesizing protein 4</fullName>
        <shortName>tRNA yW-synthesizing protein 4</shortName>
        <ecNumber>2.1.1.290</ecNumber>
        <ecNumber>2.3.1.231</ecNumber>
    </recommendedName>
    <alternativeName>
        <fullName>tRNA(Phe) (7-(3-amino-3-(methoxycarbonyl)propyl)wyosine(37)-N)-methoxycarbonyltransferase</fullName>
    </alternativeName>
    <alternativeName>
        <fullName>tRNA(Phe) (7-(3-amino-3-carboxypropyl)wyosine(37)-O)-methyltransferase</fullName>
    </alternativeName>
</protein>
<gene>
    <name type="primary">PPM2</name>
    <name type="synonym">TYW4</name>
    <name type="ordered locus">YOL141W</name>
</gene>
<dbReference type="EC" id="2.1.1.290"/>
<dbReference type="EC" id="2.3.1.231"/>
<dbReference type="EMBL" id="Z74883">
    <property type="protein sequence ID" value="CAA99162.1"/>
    <property type="molecule type" value="Genomic_DNA"/>
</dbReference>
<dbReference type="EMBL" id="BK006948">
    <property type="protein sequence ID" value="DAA10644.2"/>
    <property type="molecule type" value="Genomic_DNA"/>
</dbReference>
<dbReference type="PIR" id="S61873">
    <property type="entry name" value="S61873"/>
</dbReference>
<dbReference type="RefSeq" id="NP_014500.2">
    <property type="nucleotide sequence ID" value="NM_001183395.2"/>
</dbReference>
<dbReference type="PDB" id="2ZW9">
    <property type="method" value="X-ray"/>
    <property type="resolution" value="2.50 A"/>
    <property type="chains" value="A/B=1-695"/>
</dbReference>
<dbReference type="PDB" id="2ZWA">
    <property type="method" value="X-ray"/>
    <property type="resolution" value="1.70 A"/>
    <property type="chains" value="A/B=1-695"/>
</dbReference>
<dbReference type="PDB" id="2ZZK">
    <property type="method" value="X-ray"/>
    <property type="resolution" value="2.71 A"/>
    <property type="chains" value="A/B=1-695"/>
</dbReference>
<dbReference type="PDBsum" id="2ZW9"/>
<dbReference type="PDBsum" id="2ZWA"/>
<dbReference type="PDBsum" id="2ZZK"/>
<dbReference type="SMR" id="Q08282"/>
<dbReference type="BioGRID" id="34276">
    <property type="interactions" value="52"/>
</dbReference>
<dbReference type="FunCoup" id="Q08282">
    <property type="interactions" value="146"/>
</dbReference>
<dbReference type="IntAct" id="Q08282">
    <property type="interactions" value="3"/>
</dbReference>
<dbReference type="STRING" id="4932.YOL141W"/>
<dbReference type="iPTMnet" id="Q08282"/>
<dbReference type="PaxDb" id="4932-YOL141W"/>
<dbReference type="PeptideAtlas" id="Q08282"/>
<dbReference type="EnsemblFungi" id="YOL141W_mRNA">
    <property type="protein sequence ID" value="YOL141W"/>
    <property type="gene ID" value="YOL141W"/>
</dbReference>
<dbReference type="GeneID" id="854024"/>
<dbReference type="KEGG" id="sce:YOL141W"/>
<dbReference type="AGR" id="SGD:S000005501"/>
<dbReference type="SGD" id="S000005501">
    <property type="gene designation" value="PPM2"/>
</dbReference>
<dbReference type="VEuPathDB" id="FungiDB:YOL141W"/>
<dbReference type="eggNOG" id="KOG2918">
    <property type="taxonomic scope" value="Eukaryota"/>
</dbReference>
<dbReference type="GeneTree" id="ENSGT00940000162599"/>
<dbReference type="HOGENOM" id="CLU_002761_0_0_1"/>
<dbReference type="InParanoid" id="Q08282"/>
<dbReference type="OMA" id="FCILEQF"/>
<dbReference type="OrthoDB" id="47172at2759"/>
<dbReference type="BioCyc" id="MetaCyc:YOL141W-MONOMER"/>
<dbReference type="BioCyc" id="YEAST:YOL141W-MONOMER"/>
<dbReference type="BRENDA" id="2.1.1.290">
    <property type="organism ID" value="984"/>
</dbReference>
<dbReference type="BRENDA" id="2.3.1.231">
    <property type="organism ID" value="984"/>
</dbReference>
<dbReference type="UniPathway" id="UPA00375"/>
<dbReference type="BioGRID-ORCS" id="854024">
    <property type="hits" value="0 hits in 10 CRISPR screens"/>
</dbReference>
<dbReference type="EvolutionaryTrace" id="Q08282"/>
<dbReference type="PRO" id="PR:Q08282"/>
<dbReference type="Proteomes" id="UP000002311">
    <property type="component" value="Chromosome XV"/>
</dbReference>
<dbReference type="RNAct" id="Q08282">
    <property type="molecule type" value="protein"/>
</dbReference>
<dbReference type="GO" id="GO:0005737">
    <property type="term" value="C:cytoplasm"/>
    <property type="evidence" value="ECO:0007005"/>
    <property type="project" value="SGD"/>
</dbReference>
<dbReference type="GO" id="GO:0005739">
    <property type="term" value="C:mitochondrion"/>
    <property type="evidence" value="ECO:0007005"/>
    <property type="project" value="SGD"/>
</dbReference>
<dbReference type="GO" id="GO:0008175">
    <property type="term" value="F:tRNA methyltransferase activity"/>
    <property type="evidence" value="ECO:0000314"/>
    <property type="project" value="SGD"/>
</dbReference>
<dbReference type="GO" id="GO:0030488">
    <property type="term" value="P:tRNA methylation"/>
    <property type="evidence" value="ECO:0000314"/>
    <property type="project" value="SGD"/>
</dbReference>
<dbReference type="GO" id="GO:0006400">
    <property type="term" value="P:tRNA modification"/>
    <property type="evidence" value="ECO:0000304"/>
    <property type="project" value="Reactome"/>
</dbReference>
<dbReference type="GO" id="GO:0031591">
    <property type="term" value="P:wybutosine biosynthetic process"/>
    <property type="evidence" value="ECO:0000315"/>
    <property type="project" value="SGD"/>
</dbReference>
<dbReference type="FunFam" id="3.40.50.150:FF:000487">
    <property type="entry name" value="tRNA wybutosine-synthesizing protein 4"/>
    <property type="match status" value="1"/>
</dbReference>
<dbReference type="Gene3D" id="2.120.10.80">
    <property type="entry name" value="Kelch-type beta propeller"/>
    <property type="match status" value="1"/>
</dbReference>
<dbReference type="Gene3D" id="3.40.50.150">
    <property type="entry name" value="Vaccinia Virus protein VP39"/>
    <property type="match status" value="1"/>
</dbReference>
<dbReference type="InterPro" id="IPR011043">
    <property type="entry name" value="Gal_Oxase/kelch_b-propeller"/>
</dbReference>
<dbReference type="InterPro" id="IPR015915">
    <property type="entry name" value="Kelch-typ_b-propeller"/>
</dbReference>
<dbReference type="InterPro" id="IPR006652">
    <property type="entry name" value="Kelch_1"/>
</dbReference>
<dbReference type="InterPro" id="IPR007213">
    <property type="entry name" value="Ppm1/Ppm2/Tcmp"/>
</dbReference>
<dbReference type="InterPro" id="IPR029063">
    <property type="entry name" value="SAM-dependent_MTases_sf"/>
</dbReference>
<dbReference type="PANTHER" id="PTHR46529">
    <property type="entry name" value="TRNA WYBUTOSINE-SYNTHESIZING PROTEIN 4"/>
    <property type="match status" value="1"/>
</dbReference>
<dbReference type="PANTHER" id="PTHR46529:SF1">
    <property type="entry name" value="TRNA WYBUTOSINE-SYNTHESIZING PROTEIN 4"/>
    <property type="match status" value="1"/>
</dbReference>
<dbReference type="Pfam" id="PF13418">
    <property type="entry name" value="Kelch_4"/>
    <property type="match status" value="1"/>
</dbReference>
<dbReference type="Pfam" id="PF04072">
    <property type="entry name" value="LCM"/>
    <property type="match status" value="1"/>
</dbReference>
<dbReference type="SMART" id="SM00612">
    <property type="entry name" value="Kelch"/>
    <property type="match status" value="1"/>
</dbReference>
<dbReference type="SUPFAM" id="SSF50965">
    <property type="entry name" value="Galactose oxidase, central domain"/>
    <property type="match status" value="1"/>
</dbReference>
<dbReference type="SUPFAM" id="SSF53335">
    <property type="entry name" value="S-adenosyl-L-methionine-dependent methyltransferases"/>
    <property type="match status" value="1"/>
</dbReference>
<evidence type="ECO:0000269" key="1">
    <source>
    </source>
</evidence>
<evidence type="ECO:0000269" key="2">
    <source>
    </source>
</evidence>
<evidence type="ECO:0000269" key="3">
    <source>
    </source>
</evidence>
<evidence type="ECO:0000305" key="4"/>
<evidence type="ECO:0000305" key="5">
    <source>
    </source>
</evidence>
<evidence type="ECO:0007829" key="6">
    <source>
        <dbReference type="PDB" id="2ZW9"/>
    </source>
</evidence>
<evidence type="ECO:0007829" key="7">
    <source>
        <dbReference type="PDB" id="2ZWA"/>
    </source>
</evidence>
<evidence type="ECO:0007829" key="8">
    <source>
        <dbReference type="PDB" id="2ZZK"/>
    </source>
</evidence>